<evidence type="ECO:0000255" key="1">
    <source>
        <dbReference type="HAMAP-Rule" id="MF_00104"/>
    </source>
</evidence>
<dbReference type="EC" id="3.1.26.3" evidence="1"/>
<dbReference type="EMBL" id="CP000749">
    <property type="protein sequence ID" value="ABR70175.1"/>
    <property type="molecule type" value="Genomic_DNA"/>
</dbReference>
<dbReference type="SMR" id="A6VUP6"/>
<dbReference type="STRING" id="400668.Mmwyl1_1246"/>
<dbReference type="KEGG" id="mmw:Mmwyl1_1246"/>
<dbReference type="eggNOG" id="COG0571">
    <property type="taxonomic scope" value="Bacteria"/>
</dbReference>
<dbReference type="HOGENOM" id="CLU_000907_1_1_6"/>
<dbReference type="OrthoDB" id="9805026at2"/>
<dbReference type="GO" id="GO:0005737">
    <property type="term" value="C:cytoplasm"/>
    <property type="evidence" value="ECO:0007669"/>
    <property type="project" value="UniProtKB-SubCell"/>
</dbReference>
<dbReference type="GO" id="GO:0003725">
    <property type="term" value="F:double-stranded RNA binding"/>
    <property type="evidence" value="ECO:0007669"/>
    <property type="project" value="TreeGrafter"/>
</dbReference>
<dbReference type="GO" id="GO:0046872">
    <property type="term" value="F:metal ion binding"/>
    <property type="evidence" value="ECO:0007669"/>
    <property type="project" value="UniProtKB-KW"/>
</dbReference>
<dbReference type="GO" id="GO:0004525">
    <property type="term" value="F:ribonuclease III activity"/>
    <property type="evidence" value="ECO:0007669"/>
    <property type="project" value="UniProtKB-UniRule"/>
</dbReference>
<dbReference type="GO" id="GO:0019843">
    <property type="term" value="F:rRNA binding"/>
    <property type="evidence" value="ECO:0007669"/>
    <property type="project" value="UniProtKB-KW"/>
</dbReference>
<dbReference type="GO" id="GO:0006397">
    <property type="term" value="P:mRNA processing"/>
    <property type="evidence" value="ECO:0007669"/>
    <property type="project" value="UniProtKB-UniRule"/>
</dbReference>
<dbReference type="GO" id="GO:0010468">
    <property type="term" value="P:regulation of gene expression"/>
    <property type="evidence" value="ECO:0007669"/>
    <property type="project" value="TreeGrafter"/>
</dbReference>
<dbReference type="GO" id="GO:0006364">
    <property type="term" value="P:rRNA processing"/>
    <property type="evidence" value="ECO:0007669"/>
    <property type="project" value="UniProtKB-UniRule"/>
</dbReference>
<dbReference type="GO" id="GO:0008033">
    <property type="term" value="P:tRNA processing"/>
    <property type="evidence" value="ECO:0007669"/>
    <property type="project" value="UniProtKB-KW"/>
</dbReference>
<dbReference type="CDD" id="cd10845">
    <property type="entry name" value="DSRM_RNAse_III_family"/>
    <property type="match status" value="1"/>
</dbReference>
<dbReference type="CDD" id="cd00593">
    <property type="entry name" value="RIBOc"/>
    <property type="match status" value="1"/>
</dbReference>
<dbReference type="FunFam" id="1.10.1520.10:FF:000001">
    <property type="entry name" value="Ribonuclease 3"/>
    <property type="match status" value="1"/>
</dbReference>
<dbReference type="FunFam" id="3.30.160.20:FF:000003">
    <property type="entry name" value="Ribonuclease 3"/>
    <property type="match status" value="1"/>
</dbReference>
<dbReference type="Gene3D" id="3.30.160.20">
    <property type="match status" value="1"/>
</dbReference>
<dbReference type="Gene3D" id="1.10.1520.10">
    <property type="entry name" value="Ribonuclease III domain"/>
    <property type="match status" value="1"/>
</dbReference>
<dbReference type="HAMAP" id="MF_00104">
    <property type="entry name" value="RNase_III"/>
    <property type="match status" value="1"/>
</dbReference>
<dbReference type="InterPro" id="IPR014720">
    <property type="entry name" value="dsRBD_dom"/>
</dbReference>
<dbReference type="InterPro" id="IPR011907">
    <property type="entry name" value="RNase_III"/>
</dbReference>
<dbReference type="InterPro" id="IPR000999">
    <property type="entry name" value="RNase_III_dom"/>
</dbReference>
<dbReference type="InterPro" id="IPR036389">
    <property type="entry name" value="RNase_III_sf"/>
</dbReference>
<dbReference type="NCBIfam" id="TIGR02191">
    <property type="entry name" value="RNaseIII"/>
    <property type="match status" value="1"/>
</dbReference>
<dbReference type="PANTHER" id="PTHR11207:SF0">
    <property type="entry name" value="RIBONUCLEASE 3"/>
    <property type="match status" value="1"/>
</dbReference>
<dbReference type="PANTHER" id="PTHR11207">
    <property type="entry name" value="RIBONUCLEASE III"/>
    <property type="match status" value="1"/>
</dbReference>
<dbReference type="Pfam" id="PF00035">
    <property type="entry name" value="dsrm"/>
    <property type="match status" value="1"/>
</dbReference>
<dbReference type="Pfam" id="PF14622">
    <property type="entry name" value="Ribonucleas_3_3"/>
    <property type="match status" value="1"/>
</dbReference>
<dbReference type="SMART" id="SM00358">
    <property type="entry name" value="DSRM"/>
    <property type="match status" value="1"/>
</dbReference>
<dbReference type="SMART" id="SM00535">
    <property type="entry name" value="RIBOc"/>
    <property type="match status" value="1"/>
</dbReference>
<dbReference type="SUPFAM" id="SSF54768">
    <property type="entry name" value="dsRNA-binding domain-like"/>
    <property type="match status" value="1"/>
</dbReference>
<dbReference type="SUPFAM" id="SSF69065">
    <property type="entry name" value="RNase III domain-like"/>
    <property type="match status" value="1"/>
</dbReference>
<dbReference type="PROSITE" id="PS50137">
    <property type="entry name" value="DS_RBD"/>
    <property type="match status" value="1"/>
</dbReference>
<dbReference type="PROSITE" id="PS00517">
    <property type="entry name" value="RNASE_3_1"/>
    <property type="match status" value="1"/>
</dbReference>
<dbReference type="PROSITE" id="PS50142">
    <property type="entry name" value="RNASE_3_2"/>
    <property type="match status" value="1"/>
</dbReference>
<sequence>MSSLYQKLSRRIGYFFADLGLLELALTHRSFGGKNNERLEFLGDSILNYVIAEDLFHRFPKAKEGELSRLRASLVKGDTLAELAREFELGDYLKLGAGELKSGGFRRDSILADTVEGIIGAMYLDAGMDVCRQHILAWYKERLDATSLKIVTKDAKTRLQEFLQARKHALPQYDVVNIVGEPHDQTFYVHCHIELCEEFIEGKGNSRRIAEQNAAAKALKKLEKKDV</sequence>
<comment type="function">
    <text evidence="1">Digests double-stranded RNA. Involved in the processing of primary rRNA transcript to yield the immediate precursors to the large and small rRNAs (23S and 16S). Processes some mRNAs, and tRNAs when they are encoded in the rRNA operon. Processes pre-crRNA and tracrRNA of type II CRISPR loci if present in the organism.</text>
</comment>
<comment type="catalytic activity">
    <reaction evidence="1">
        <text>Endonucleolytic cleavage to 5'-phosphomonoester.</text>
        <dbReference type="EC" id="3.1.26.3"/>
    </reaction>
</comment>
<comment type="cofactor">
    <cofactor evidence="1">
        <name>Mg(2+)</name>
        <dbReference type="ChEBI" id="CHEBI:18420"/>
    </cofactor>
</comment>
<comment type="subunit">
    <text evidence="1">Homodimer.</text>
</comment>
<comment type="subcellular location">
    <subcellularLocation>
        <location evidence="1">Cytoplasm</location>
    </subcellularLocation>
</comment>
<comment type="similarity">
    <text evidence="1">Belongs to the ribonuclease III family.</text>
</comment>
<reference key="1">
    <citation type="submission" date="2007-06" db="EMBL/GenBank/DDBJ databases">
        <title>Complete sequence of Marinomonas sp. MWYL1.</title>
        <authorList>
            <consortium name="US DOE Joint Genome Institute"/>
            <person name="Copeland A."/>
            <person name="Lucas S."/>
            <person name="Lapidus A."/>
            <person name="Barry K."/>
            <person name="Glavina del Rio T."/>
            <person name="Dalin E."/>
            <person name="Tice H."/>
            <person name="Pitluck S."/>
            <person name="Kiss H."/>
            <person name="Brettin T."/>
            <person name="Bruce D."/>
            <person name="Detter J.C."/>
            <person name="Han C."/>
            <person name="Schmutz J."/>
            <person name="Larimer F."/>
            <person name="Land M."/>
            <person name="Hauser L."/>
            <person name="Kyrpides N."/>
            <person name="Kim E."/>
            <person name="Johnston A.W.B."/>
            <person name="Todd J.D."/>
            <person name="Rogers R."/>
            <person name="Wexler M."/>
            <person name="Bond P.L."/>
            <person name="Li Y."/>
            <person name="Richardson P."/>
        </authorList>
    </citation>
    <scope>NUCLEOTIDE SEQUENCE [LARGE SCALE GENOMIC DNA]</scope>
    <source>
        <strain>MWYL1</strain>
    </source>
</reference>
<protein>
    <recommendedName>
        <fullName evidence="1">Ribonuclease 3</fullName>
        <ecNumber evidence="1">3.1.26.3</ecNumber>
    </recommendedName>
    <alternativeName>
        <fullName evidence="1">Ribonuclease III</fullName>
        <shortName evidence="1">RNase III</shortName>
    </alternativeName>
</protein>
<gene>
    <name evidence="1" type="primary">rnc</name>
    <name type="ordered locus">Mmwyl1_1246</name>
</gene>
<keyword id="KW-0963">Cytoplasm</keyword>
<keyword id="KW-0255">Endonuclease</keyword>
<keyword id="KW-0378">Hydrolase</keyword>
<keyword id="KW-0460">Magnesium</keyword>
<keyword id="KW-0479">Metal-binding</keyword>
<keyword id="KW-0507">mRNA processing</keyword>
<keyword id="KW-0540">Nuclease</keyword>
<keyword id="KW-0694">RNA-binding</keyword>
<keyword id="KW-0698">rRNA processing</keyword>
<keyword id="KW-0699">rRNA-binding</keyword>
<keyword id="KW-0819">tRNA processing</keyword>
<organism>
    <name type="scientific">Marinomonas sp. (strain MWYL1)</name>
    <dbReference type="NCBI Taxonomy" id="400668"/>
    <lineage>
        <taxon>Bacteria</taxon>
        <taxon>Pseudomonadati</taxon>
        <taxon>Pseudomonadota</taxon>
        <taxon>Gammaproteobacteria</taxon>
        <taxon>Oceanospirillales</taxon>
        <taxon>Oceanospirillaceae</taxon>
        <taxon>Marinomonas</taxon>
    </lineage>
</organism>
<name>RNC_MARMS</name>
<feature type="chain" id="PRO_1000075778" description="Ribonuclease 3">
    <location>
        <begin position="1"/>
        <end position="227"/>
    </location>
</feature>
<feature type="domain" description="RNase III" evidence="1">
    <location>
        <begin position="5"/>
        <end position="127"/>
    </location>
</feature>
<feature type="domain" description="DRBM" evidence="1">
    <location>
        <begin position="154"/>
        <end position="224"/>
    </location>
</feature>
<feature type="active site" evidence="1">
    <location>
        <position position="44"/>
    </location>
</feature>
<feature type="active site" evidence="1">
    <location>
        <position position="116"/>
    </location>
</feature>
<feature type="binding site" evidence="1">
    <location>
        <position position="40"/>
    </location>
    <ligand>
        <name>Mg(2+)</name>
        <dbReference type="ChEBI" id="CHEBI:18420"/>
    </ligand>
</feature>
<feature type="binding site" evidence="1">
    <location>
        <position position="113"/>
    </location>
    <ligand>
        <name>Mg(2+)</name>
        <dbReference type="ChEBI" id="CHEBI:18420"/>
    </ligand>
</feature>
<feature type="binding site" evidence="1">
    <location>
        <position position="116"/>
    </location>
    <ligand>
        <name>Mg(2+)</name>
        <dbReference type="ChEBI" id="CHEBI:18420"/>
    </ligand>
</feature>
<accession>A6VUP6</accession>
<proteinExistence type="inferred from homology"/>